<name>F16PA_CROS5</name>
<accession>B1WX40</accession>
<dbReference type="EC" id="3.1.3.11" evidence="1"/>
<dbReference type="EMBL" id="CP000806">
    <property type="protein sequence ID" value="ACB54106.1"/>
    <property type="molecule type" value="Genomic_DNA"/>
</dbReference>
<dbReference type="SMR" id="B1WX40"/>
<dbReference type="STRING" id="43989.cce_4758"/>
<dbReference type="KEGG" id="cyt:cce_4758"/>
<dbReference type="eggNOG" id="COG0158">
    <property type="taxonomic scope" value="Bacteria"/>
</dbReference>
<dbReference type="HOGENOM" id="CLU_039977_2_2_3"/>
<dbReference type="UniPathway" id="UPA00116"/>
<dbReference type="Proteomes" id="UP000001203">
    <property type="component" value="Chromosome circular"/>
</dbReference>
<dbReference type="GO" id="GO:0005829">
    <property type="term" value="C:cytosol"/>
    <property type="evidence" value="ECO:0007669"/>
    <property type="project" value="TreeGrafter"/>
</dbReference>
<dbReference type="GO" id="GO:0042132">
    <property type="term" value="F:fructose 1,6-bisphosphate 1-phosphatase activity"/>
    <property type="evidence" value="ECO:0007669"/>
    <property type="project" value="UniProtKB-UniRule"/>
</dbReference>
<dbReference type="GO" id="GO:0000287">
    <property type="term" value="F:magnesium ion binding"/>
    <property type="evidence" value="ECO:0007669"/>
    <property type="project" value="UniProtKB-UniRule"/>
</dbReference>
<dbReference type="GO" id="GO:0030388">
    <property type="term" value="P:fructose 1,6-bisphosphate metabolic process"/>
    <property type="evidence" value="ECO:0007669"/>
    <property type="project" value="TreeGrafter"/>
</dbReference>
<dbReference type="GO" id="GO:0006002">
    <property type="term" value="P:fructose 6-phosphate metabolic process"/>
    <property type="evidence" value="ECO:0007669"/>
    <property type="project" value="TreeGrafter"/>
</dbReference>
<dbReference type="GO" id="GO:0006000">
    <property type="term" value="P:fructose metabolic process"/>
    <property type="evidence" value="ECO:0007669"/>
    <property type="project" value="TreeGrafter"/>
</dbReference>
<dbReference type="GO" id="GO:0006094">
    <property type="term" value="P:gluconeogenesis"/>
    <property type="evidence" value="ECO:0007669"/>
    <property type="project" value="UniProtKB-UniRule"/>
</dbReference>
<dbReference type="GO" id="GO:0019253">
    <property type="term" value="P:reductive pentose-phosphate cycle"/>
    <property type="evidence" value="ECO:0007669"/>
    <property type="project" value="UniProtKB-UniRule"/>
</dbReference>
<dbReference type="GO" id="GO:0005986">
    <property type="term" value="P:sucrose biosynthetic process"/>
    <property type="evidence" value="ECO:0007669"/>
    <property type="project" value="TreeGrafter"/>
</dbReference>
<dbReference type="CDD" id="cd00354">
    <property type="entry name" value="FBPase"/>
    <property type="match status" value="1"/>
</dbReference>
<dbReference type="FunFam" id="3.30.540.10:FF:000002">
    <property type="entry name" value="Fructose-1,6-bisphosphatase class 1"/>
    <property type="match status" value="1"/>
</dbReference>
<dbReference type="Gene3D" id="3.40.190.80">
    <property type="match status" value="1"/>
</dbReference>
<dbReference type="Gene3D" id="3.30.540.10">
    <property type="entry name" value="Fructose-1,6-Bisphosphatase, subunit A, domain 1"/>
    <property type="match status" value="1"/>
</dbReference>
<dbReference type="HAMAP" id="MF_01855">
    <property type="entry name" value="FBPase_class1"/>
    <property type="match status" value="1"/>
</dbReference>
<dbReference type="InterPro" id="IPR044015">
    <property type="entry name" value="FBPase_C_dom"/>
</dbReference>
<dbReference type="InterPro" id="IPR000146">
    <property type="entry name" value="FBPase_class-1"/>
</dbReference>
<dbReference type="InterPro" id="IPR033391">
    <property type="entry name" value="FBPase_N"/>
</dbReference>
<dbReference type="InterPro" id="IPR028343">
    <property type="entry name" value="FBPtase"/>
</dbReference>
<dbReference type="InterPro" id="IPR020548">
    <property type="entry name" value="Fructose_bisphosphatase_AS"/>
</dbReference>
<dbReference type="NCBIfam" id="NF006778">
    <property type="entry name" value="PRK09293.1-1"/>
    <property type="match status" value="1"/>
</dbReference>
<dbReference type="PANTHER" id="PTHR11556">
    <property type="entry name" value="FRUCTOSE-1,6-BISPHOSPHATASE-RELATED"/>
    <property type="match status" value="1"/>
</dbReference>
<dbReference type="PANTHER" id="PTHR11556:SF35">
    <property type="entry name" value="SEDOHEPTULOSE-1,7-BISPHOSPHATASE, CHLOROPLASTIC"/>
    <property type="match status" value="1"/>
</dbReference>
<dbReference type="Pfam" id="PF00316">
    <property type="entry name" value="FBPase"/>
    <property type="match status" value="1"/>
</dbReference>
<dbReference type="Pfam" id="PF18913">
    <property type="entry name" value="FBPase_C"/>
    <property type="match status" value="1"/>
</dbReference>
<dbReference type="PIRSF" id="PIRSF500210">
    <property type="entry name" value="FBPtase"/>
    <property type="match status" value="1"/>
</dbReference>
<dbReference type="PIRSF" id="PIRSF000904">
    <property type="entry name" value="FBPtase_SBPase"/>
    <property type="match status" value="1"/>
</dbReference>
<dbReference type="PRINTS" id="PR00115">
    <property type="entry name" value="F16BPHPHTASE"/>
</dbReference>
<dbReference type="SUPFAM" id="SSF56655">
    <property type="entry name" value="Carbohydrate phosphatase"/>
    <property type="match status" value="1"/>
</dbReference>
<dbReference type="PROSITE" id="PS00124">
    <property type="entry name" value="FBPASE"/>
    <property type="match status" value="1"/>
</dbReference>
<gene>
    <name evidence="1" type="primary">fbp</name>
    <name type="ordered locus">cce_4758</name>
</gene>
<protein>
    <recommendedName>
        <fullName evidence="1">Fructose-1,6-bisphosphatase class 1</fullName>
        <shortName evidence="1">FBPase class 1</shortName>
        <ecNumber evidence="1">3.1.3.11</ecNumber>
    </recommendedName>
    <alternativeName>
        <fullName evidence="1">D-fructose-1,6-bisphosphate 1-phosphohydrolase class 1</fullName>
    </alternativeName>
</protein>
<sequence>MTFIMTSLQTPAVPEHSLDRDCTTLSRHVLQQLQSFSPEAQDLSAIMNRIALAGKLVARRLSRAGLMADVLGFTGETNVQGESVKKMDVYANDVFISVFKQSGLVCRLASEEMDKPYYIPENCPIGRYTLLYDPIDGSSNVDINLNVGSIFAIRQQKEDDLDGEGNDLLKDGREQIAAGYIVYGPSTMLVYSIGHGVHSFLLDPSLGEFILAQENIQIPDHGPVYSTNEGNFWQWDDAIRDYTRYVHRHEGYTARYSGALVGDIHRILMQGGVFLYPGTVKKPEGKLRLLYESAPLAFLVEQAGGKASNGLKPILDVVPDKLHARSPLVIGSKEDVSLVESFIQDHQHRNHG</sequence>
<keyword id="KW-0113">Calvin cycle</keyword>
<keyword id="KW-0119">Carbohydrate metabolism</keyword>
<keyword id="KW-0963">Cytoplasm</keyword>
<keyword id="KW-0378">Hydrolase</keyword>
<keyword id="KW-0460">Magnesium</keyword>
<keyword id="KW-0479">Metal-binding</keyword>
<keyword id="KW-1185">Reference proteome</keyword>
<comment type="catalytic activity">
    <reaction evidence="1">
        <text>beta-D-fructose 1,6-bisphosphate + H2O = beta-D-fructose 6-phosphate + phosphate</text>
        <dbReference type="Rhea" id="RHEA:11064"/>
        <dbReference type="ChEBI" id="CHEBI:15377"/>
        <dbReference type="ChEBI" id="CHEBI:32966"/>
        <dbReference type="ChEBI" id="CHEBI:43474"/>
        <dbReference type="ChEBI" id="CHEBI:57634"/>
        <dbReference type="EC" id="3.1.3.11"/>
    </reaction>
</comment>
<comment type="cofactor">
    <cofactor evidence="1">
        <name>Mg(2+)</name>
        <dbReference type="ChEBI" id="CHEBI:18420"/>
    </cofactor>
    <text evidence="1">Binds 2 magnesium ions per subunit.</text>
</comment>
<comment type="pathway">
    <text evidence="1">Carbohydrate biosynthesis; Calvin cycle.</text>
</comment>
<comment type="subunit">
    <text evidence="1">Homotetramer.</text>
</comment>
<comment type="subcellular location">
    <subcellularLocation>
        <location evidence="1">Cytoplasm</location>
    </subcellularLocation>
</comment>
<comment type="similarity">
    <text evidence="1">Belongs to the FBPase class 1 family.</text>
</comment>
<feature type="chain" id="PRO_0000364532" description="Fructose-1,6-bisphosphatase class 1">
    <location>
        <begin position="1"/>
        <end position="352"/>
    </location>
</feature>
<feature type="binding site" evidence="1">
    <location>
        <position position="111"/>
    </location>
    <ligand>
        <name>Mg(2+)</name>
        <dbReference type="ChEBI" id="CHEBI:18420"/>
        <label>1</label>
    </ligand>
</feature>
<feature type="binding site" evidence="1">
    <location>
        <position position="133"/>
    </location>
    <ligand>
        <name>Mg(2+)</name>
        <dbReference type="ChEBI" id="CHEBI:18420"/>
        <label>1</label>
    </ligand>
</feature>
<feature type="binding site" evidence="1">
    <location>
        <position position="133"/>
    </location>
    <ligand>
        <name>Mg(2+)</name>
        <dbReference type="ChEBI" id="CHEBI:18420"/>
        <label>2</label>
    </ligand>
</feature>
<feature type="binding site" evidence="1">
    <location>
        <position position="135"/>
    </location>
    <ligand>
        <name>Mg(2+)</name>
        <dbReference type="ChEBI" id="CHEBI:18420"/>
        <label>1</label>
    </ligand>
</feature>
<feature type="binding site" evidence="1">
    <location>
        <begin position="136"/>
        <end position="139"/>
    </location>
    <ligand>
        <name>substrate</name>
    </ligand>
</feature>
<feature type="binding site" evidence="1">
    <location>
        <position position="136"/>
    </location>
    <ligand>
        <name>Mg(2+)</name>
        <dbReference type="ChEBI" id="CHEBI:18420"/>
        <label>2</label>
    </ligand>
</feature>
<feature type="binding site" evidence="1">
    <location>
        <position position="228"/>
    </location>
    <ligand>
        <name>substrate</name>
    </ligand>
</feature>
<feature type="binding site" evidence="1">
    <location>
        <position position="256"/>
    </location>
    <ligand>
        <name>substrate</name>
    </ligand>
</feature>
<feature type="binding site" evidence="1">
    <location>
        <position position="286"/>
    </location>
    <ligand>
        <name>substrate</name>
    </ligand>
</feature>
<feature type="binding site" evidence="1">
    <location>
        <position position="292"/>
    </location>
    <ligand>
        <name>Mg(2+)</name>
        <dbReference type="ChEBI" id="CHEBI:18420"/>
        <label>2</label>
    </ligand>
</feature>
<reference key="1">
    <citation type="journal article" date="2008" name="Proc. Natl. Acad. Sci. U.S.A.">
        <title>The genome of Cyanothece 51142, a unicellular diazotrophic cyanobacterium important in the marine nitrogen cycle.</title>
        <authorList>
            <person name="Welsh E.A."/>
            <person name="Liberton M."/>
            <person name="Stoeckel J."/>
            <person name="Loh T."/>
            <person name="Elvitigala T."/>
            <person name="Wang C."/>
            <person name="Wollam A."/>
            <person name="Fulton R.S."/>
            <person name="Clifton S.W."/>
            <person name="Jacobs J.M."/>
            <person name="Aurora R."/>
            <person name="Ghosh B.K."/>
            <person name="Sherman L.A."/>
            <person name="Smith R.D."/>
            <person name="Wilson R.K."/>
            <person name="Pakrasi H.B."/>
        </authorList>
    </citation>
    <scope>NUCLEOTIDE SEQUENCE [LARGE SCALE GENOMIC DNA]</scope>
    <source>
        <strain>ATCC 51142 / BH68</strain>
    </source>
</reference>
<proteinExistence type="inferred from homology"/>
<organism>
    <name type="scientific">Crocosphaera subtropica (strain ATCC 51142 / BH68)</name>
    <name type="common">Cyanothece sp. (strain ATCC 51142)</name>
    <dbReference type="NCBI Taxonomy" id="43989"/>
    <lineage>
        <taxon>Bacteria</taxon>
        <taxon>Bacillati</taxon>
        <taxon>Cyanobacteriota</taxon>
        <taxon>Cyanophyceae</taxon>
        <taxon>Oscillatoriophycideae</taxon>
        <taxon>Chroococcales</taxon>
        <taxon>Aphanothecaceae</taxon>
        <taxon>Crocosphaera</taxon>
        <taxon>Crocosphaera subtropica</taxon>
    </lineage>
</organism>
<evidence type="ECO:0000255" key="1">
    <source>
        <dbReference type="HAMAP-Rule" id="MF_01855"/>
    </source>
</evidence>